<comment type="function">
    <text evidence="1">Part of the outer membrane protein assembly complex, which is involved in assembly and insertion of beta-barrel proteins into the outer membrane.</text>
</comment>
<comment type="subunit">
    <text evidence="1">Part of the Bam complex.</text>
</comment>
<comment type="subcellular location">
    <subcellularLocation>
        <location evidence="1">Cell outer membrane</location>
        <topology evidence="1">Lipid-anchor</topology>
    </subcellularLocation>
</comment>
<comment type="similarity">
    <text evidence="1">Belongs to the BamB family.</text>
</comment>
<name>BAMB_SHEON</name>
<gene>
    <name evidence="1" type="primary">bamB</name>
    <name type="ordered locus">SO_3309</name>
</gene>
<sequence>MKSWCKNLLAAGLSLAMLSACSSSDVEEEPVSELTAIQATVFPEVSWSASVGDGVGDYYSRLTPAVRYGKIFAADRYGAVMAFDEASGEQVWRKDFSEEFRDNALAKNKGARLAAGITAARNKLFIGGESGLLAALNAEDGQVLWHVIAGGELLSKPTVADDVVVVSTSSGSLEAYNVDTGAKLWVYDMQLPNLTLRGTGSAAYEAGGFFIGTADGKVAVVVKNNGQAAWEQAIYNPTGGNEFTRMADVDMTPLILGDNLYAVSYNGNLVSMELRTGRIIWTRKYSSFNELTTAGLSLFLVDDHSRIYSVDRRNGLELWSNSELVNRTLTSPEVYKDYLVVGDFEGYLHFIDRSTGSIVGRIQVDSSGLFSQPIVVDDKIYVQGRSGKLAVVTLP</sequence>
<reference key="1">
    <citation type="journal article" date="2002" name="Nat. Biotechnol.">
        <title>Genome sequence of the dissimilatory metal ion-reducing bacterium Shewanella oneidensis.</title>
        <authorList>
            <person name="Heidelberg J.F."/>
            <person name="Paulsen I.T."/>
            <person name="Nelson K.E."/>
            <person name="Gaidos E.J."/>
            <person name="Nelson W.C."/>
            <person name="Read T.D."/>
            <person name="Eisen J.A."/>
            <person name="Seshadri R."/>
            <person name="Ward N.L."/>
            <person name="Methe B.A."/>
            <person name="Clayton R.A."/>
            <person name="Meyer T."/>
            <person name="Tsapin A."/>
            <person name="Scott J."/>
            <person name="Beanan M.J."/>
            <person name="Brinkac L.M."/>
            <person name="Daugherty S.C."/>
            <person name="DeBoy R.T."/>
            <person name="Dodson R.J."/>
            <person name="Durkin A.S."/>
            <person name="Haft D.H."/>
            <person name="Kolonay J.F."/>
            <person name="Madupu R."/>
            <person name="Peterson J.D."/>
            <person name="Umayam L.A."/>
            <person name="White O."/>
            <person name="Wolf A.M."/>
            <person name="Vamathevan J.J."/>
            <person name="Weidman J.F."/>
            <person name="Impraim M."/>
            <person name="Lee K."/>
            <person name="Berry K.J."/>
            <person name="Lee C."/>
            <person name="Mueller J."/>
            <person name="Khouri H.M."/>
            <person name="Gill J."/>
            <person name="Utterback T.R."/>
            <person name="McDonald L.A."/>
            <person name="Feldblyum T.V."/>
            <person name="Smith H.O."/>
            <person name="Venter J.C."/>
            <person name="Nealson K.H."/>
            <person name="Fraser C.M."/>
        </authorList>
    </citation>
    <scope>NUCLEOTIDE SEQUENCE [LARGE SCALE GENOMIC DNA]</scope>
    <source>
        <strain>ATCC 700550 / JCM 31522 / CIP 106686 / LMG 19005 / NCIMB 14063 / MR-1</strain>
    </source>
</reference>
<dbReference type="EMBL" id="AE014299">
    <property type="protein sequence ID" value="AAN56307.1"/>
    <property type="molecule type" value="Genomic_DNA"/>
</dbReference>
<dbReference type="RefSeq" id="NP_718863.1">
    <property type="nucleotide sequence ID" value="NC_004347.2"/>
</dbReference>
<dbReference type="RefSeq" id="WP_011073185.1">
    <property type="nucleotide sequence ID" value="NC_004347.2"/>
</dbReference>
<dbReference type="SMR" id="Q8EC35"/>
<dbReference type="STRING" id="211586.SO_3309"/>
<dbReference type="PaxDb" id="211586-SO_3309"/>
<dbReference type="KEGG" id="son:SO_3309"/>
<dbReference type="PATRIC" id="fig|211586.12.peg.3210"/>
<dbReference type="eggNOG" id="COG1520">
    <property type="taxonomic scope" value="Bacteria"/>
</dbReference>
<dbReference type="HOGENOM" id="CLU_027480_0_1_6"/>
<dbReference type="OrthoDB" id="5173551at2"/>
<dbReference type="PhylomeDB" id="Q8EC35"/>
<dbReference type="BioCyc" id="SONE211586:G1GMP-3081-MONOMER"/>
<dbReference type="Proteomes" id="UP000008186">
    <property type="component" value="Chromosome"/>
</dbReference>
<dbReference type="GO" id="GO:0009279">
    <property type="term" value="C:cell outer membrane"/>
    <property type="evidence" value="ECO:0007669"/>
    <property type="project" value="UniProtKB-SubCell"/>
</dbReference>
<dbReference type="GO" id="GO:0043165">
    <property type="term" value="P:Gram-negative-bacterium-type cell outer membrane assembly"/>
    <property type="evidence" value="ECO:0007669"/>
    <property type="project" value="UniProtKB-UniRule"/>
</dbReference>
<dbReference type="GO" id="GO:0051205">
    <property type="term" value="P:protein insertion into membrane"/>
    <property type="evidence" value="ECO:0007669"/>
    <property type="project" value="UniProtKB-UniRule"/>
</dbReference>
<dbReference type="Gene3D" id="2.130.10.10">
    <property type="entry name" value="YVTN repeat-like/Quinoprotein amine dehydrogenase"/>
    <property type="match status" value="1"/>
</dbReference>
<dbReference type="HAMAP" id="MF_00923">
    <property type="entry name" value="OM_assembly_BamB"/>
    <property type="match status" value="1"/>
</dbReference>
<dbReference type="InterPro" id="IPR017687">
    <property type="entry name" value="BamB"/>
</dbReference>
<dbReference type="InterPro" id="IPR018391">
    <property type="entry name" value="PQQ_b-propeller_rpt"/>
</dbReference>
<dbReference type="InterPro" id="IPR002372">
    <property type="entry name" value="PQQ_rpt_dom"/>
</dbReference>
<dbReference type="InterPro" id="IPR011047">
    <property type="entry name" value="Quinoprotein_ADH-like_sf"/>
</dbReference>
<dbReference type="InterPro" id="IPR015943">
    <property type="entry name" value="WD40/YVTN_repeat-like_dom_sf"/>
</dbReference>
<dbReference type="NCBIfam" id="TIGR03300">
    <property type="entry name" value="assembly_YfgL"/>
    <property type="match status" value="1"/>
</dbReference>
<dbReference type="NCBIfam" id="NF008351">
    <property type="entry name" value="PRK11138.1"/>
    <property type="match status" value="1"/>
</dbReference>
<dbReference type="PANTHER" id="PTHR34512">
    <property type="entry name" value="CELL SURFACE PROTEIN"/>
    <property type="match status" value="1"/>
</dbReference>
<dbReference type="PANTHER" id="PTHR34512:SF30">
    <property type="entry name" value="OUTER MEMBRANE PROTEIN ASSEMBLY FACTOR BAMB"/>
    <property type="match status" value="1"/>
</dbReference>
<dbReference type="Pfam" id="PF13360">
    <property type="entry name" value="PQQ_2"/>
    <property type="match status" value="2"/>
</dbReference>
<dbReference type="SMART" id="SM00564">
    <property type="entry name" value="PQQ"/>
    <property type="match status" value="7"/>
</dbReference>
<dbReference type="SUPFAM" id="SSF50998">
    <property type="entry name" value="Quinoprotein alcohol dehydrogenase-like"/>
    <property type="match status" value="1"/>
</dbReference>
<dbReference type="PROSITE" id="PS51257">
    <property type="entry name" value="PROKAR_LIPOPROTEIN"/>
    <property type="match status" value="1"/>
</dbReference>
<feature type="signal peptide" evidence="1">
    <location>
        <begin position="1"/>
        <end position="20"/>
    </location>
</feature>
<feature type="chain" id="PRO_0000417688" description="Outer membrane protein assembly factor BamB">
    <location>
        <begin position="21"/>
        <end position="395"/>
    </location>
</feature>
<feature type="lipid moiety-binding region" description="N-palmitoyl cysteine" evidence="1">
    <location>
        <position position="21"/>
    </location>
</feature>
<feature type="lipid moiety-binding region" description="S-diacylglycerol cysteine" evidence="1">
    <location>
        <position position="21"/>
    </location>
</feature>
<evidence type="ECO:0000255" key="1">
    <source>
        <dbReference type="HAMAP-Rule" id="MF_00923"/>
    </source>
</evidence>
<organism>
    <name type="scientific">Shewanella oneidensis (strain ATCC 700550 / JCM 31522 / CIP 106686 / LMG 19005 / NCIMB 14063 / MR-1)</name>
    <dbReference type="NCBI Taxonomy" id="211586"/>
    <lineage>
        <taxon>Bacteria</taxon>
        <taxon>Pseudomonadati</taxon>
        <taxon>Pseudomonadota</taxon>
        <taxon>Gammaproteobacteria</taxon>
        <taxon>Alteromonadales</taxon>
        <taxon>Shewanellaceae</taxon>
        <taxon>Shewanella</taxon>
    </lineage>
</organism>
<accession>Q8EC35</accession>
<keyword id="KW-0998">Cell outer membrane</keyword>
<keyword id="KW-0449">Lipoprotein</keyword>
<keyword id="KW-0472">Membrane</keyword>
<keyword id="KW-0564">Palmitate</keyword>
<keyword id="KW-1185">Reference proteome</keyword>
<keyword id="KW-0732">Signal</keyword>
<protein>
    <recommendedName>
        <fullName evidence="1">Outer membrane protein assembly factor BamB</fullName>
    </recommendedName>
</protein>
<proteinExistence type="inferred from homology"/>